<evidence type="ECO:0000255" key="1">
    <source>
        <dbReference type="HAMAP-Rule" id="MF_01454"/>
    </source>
</evidence>
<evidence type="ECO:0000255" key="2">
    <source>
        <dbReference type="PROSITE-ProRule" id="PRU01231"/>
    </source>
</evidence>
<reference key="1">
    <citation type="journal article" date="2011" name="MBio">
        <title>Novel metabolic attributes of the genus Cyanothece, comprising a group of unicellular nitrogen-fixing Cyanobacteria.</title>
        <authorList>
            <person name="Bandyopadhyay A."/>
            <person name="Elvitigala T."/>
            <person name="Welsh E."/>
            <person name="Stockel J."/>
            <person name="Liberton M."/>
            <person name="Min H."/>
            <person name="Sherman L.A."/>
            <person name="Pakrasi H.B."/>
        </authorList>
    </citation>
    <scope>NUCLEOTIDE SEQUENCE [LARGE SCALE GENOMIC DNA]</scope>
    <source>
        <strain>PCC 8801 / RF-1</strain>
    </source>
</reference>
<dbReference type="EC" id="3.6.5.-" evidence="1"/>
<dbReference type="EMBL" id="CP001287">
    <property type="protein sequence ID" value="ACK68312.1"/>
    <property type="molecule type" value="Genomic_DNA"/>
</dbReference>
<dbReference type="RefSeq" id="WP_015785366.1">
    <property type="nucleotide sequence ID" value="NC_011726.1"/>
</dbReference>
<dbReference type="SMR" id="B7JVH9"/>
<dbReference type="STRING" id="41431.PCC8801_4390"/>
<dbReference type="KEGG" id="cyp:PCC8801_4390"/>
<dbReference type="eggNOG" id="COG0536">
    <property type="taxonomic scope" value="Bacteria"/>
</dbReference>
<dbReference type="HOGENOM" id="CLU_011747_2_3_3"/>
<dbReference type="OrthoDB" id="9807318at2"/>
<dbReference type="Proteomes" id="UP000008204">
    <property type="component" value="Chromosome"/>
</dbReference>
<dbReference type="GO" id="GO:0005737">
    <property type="term" value="C:cytoplasm"/>
    <property type="evidence" value="ECO:0007669"/>
    <property type="project" value="UniProtKB-SubCell"/>
</dbReference>
<dbReference type="GO" id="GO:0005525">
    <property type="term" value="F:GTP binding"/>
    <property type="evidence" value="ECO:0007669"/>
    <property type="project" value="UniProtKB-UniRule"/>
</dbReference>
<dbReference type="GO" id="GO:0003924">
    <property type="term" value="F:GTPase activity"/>
    <property type="evidence" value="ECO:0007669"/>
    <property type="project" value="UniProtKB-UniRule"/>
</dbReference>
<dbReference type="GO" id="GO:0000287">
    <property type="term" value="F:magnesium ion binding"/>
    <property type="evidence" value="ECO:0007669"/>
    <property type="project" value="InterPro"/>
</dbReference>
<dbReference type="GO" id="GO:0042254">
    <property type="term" value="P:ribosome biogenesis"/>
    <property type="evidence" value="ECO:0007669"/>
    <property type="project" value="UniProtKB-UniRule"/>
</dbReference>
<dbReference type="CDD" id="cd01898">
    <property type="entry name" value="Obg"/>
    <property type="match status" value="1"/>
</dbReference>
<dbReference type="FunFam" id="2.70.210.12:FF:000001">
    <property type="entry name" value="GTPase Obg"/>
    <property type="match status" value="1"/>
</dbReference>
<dbReference type="Gene3D" id="2.70.210.12">
    <property type="entry name" value="GTP1/OBG domain"/>
    <property type="match status" value="1"/>
</dbReference>
<dbReference type="Gene3D" id="3.40.50.300">
    <property type="entry name" value="P-loop containing nucleotide triphosphate hydrolases"/>
    <property type="match status" value="1"/>
</dbReference>
<dbReference type="HAMAP" id="MF_01454">
    <property type="entry name" value="GTPase_Obg"/>
    <property type="match status" value="1"/>
</dbReference>
<dbReference type="InterPro" id="IPR031167">
    <property type="entry name" value="G_OBG"/>
</dbReference>
<dbReference type="InterPro" id="IPR006073">
    <property type="entry name" value="GTP-bd"/>
</dbReference>
<dbReference type="InterPro" id="IPR014100">
    <property type="entry name" value="GTP-bd_Obg/CgtA"/>
</dbReference>
<dbReference type="InterPro" id="IPR006074">
    <property type="entry name" value="GTP1-OBG_CS"/>
</dbReference>
<dbReference type="InterPro" id="IPR006169">
    <property type="entry name" value="GTP1_OBG_dom"/>
</dbReference>
<dbReference type="InterPro" id="IPR036726">
    <property type="entry name" value="GTP1_OBG_dom_sf"/>
</dbReference>
<dbReference type="InterPro" id="IPR045086">
    <property type="entry name" value="OBG_GTPase"/>
</dbReference>
<dbReference type="InterPro" id="IPR027417">
    <property type="entry name" value="P-loop_NTPase"/>
</dbReference>
<dbReference type="NCBIfam" id="TIGR02729">
    <property type="entry name" value="Obg_CgtA"/>
    <property type="match status" value="1"/>
</dbReference>
<dbReference type="NCBIfam" id="NF008955">
    <property type="entry name" value="PRK12297.1"/>
    <property type="match status" value="1"/>
</dbReference>
<dbReference type="NCBIfam" id="NF008956">
    <property type="entry name" value="PRK12299.1"/>
    <property type="match status" value="1"/>
</dbReference>
<dbReference type="PANTHER" id="PTHR11702">
    <property type="entry name" value="DEVELOPMENTALLY REGULATED GTP-BINDING PROTEIN-RELATED"/>
    <property type="match status" value="1"/>
</dbReference>
<dbReference type="PANTHER" id="PTHR11702:SF31">
    <property type="entry name" value="MITOCHONDRIAL RIBOSOME-ASSOCIATED GTPASE 2"/>
    <property type="match status" value="1"/>
</dbReference>
<dbReference type="Pfam" id="PF01018">
    <property type="entry name" value="GTP1_OBG"/>
    <property type="match status" value="1"/>
</dbReference>
<dbReference type="Pfam" id="PF01926">
    <property type="entry name" value="MMR_HSR1"/>
    <property type="match status" value="1"/>
</dbReference>
<dbReference type="PIRSF" id="PIRSF002401">
    <property type="entry name" value="GTP_bd_Obg/CgtA"/>
    <property type="match status" value="1"/>
</dbReference>
<dbReference type="PRINTS" id="PR00326">
    <property type="entry name" value="GTP1OBG"/>
</dbReference>
<dbReference type="SUPFAM" id="SSF82051">
    <property type="entry name" value="Obg GTP-binding protein N-terminal domain"/>
    <property type="match status" value="1"/>
</dbReference>
<dbReference type="SUPFAM" id="SSF52540">
    <property type="entry name" value="P-loop containing nucleoside triphosphate hydrolases"/>
    <property type="match status" value="1"/>
</dbReference>
<dbReference type="PROSITE" id="PS51710">
    <property type="entry name" value="G_OBG"/>
    <property type="match status" value="1"/>
</dbReference>
<dbReference type="PROSITE" id="PS00905">
    <property type="entry name" value="GTP1_OBG"/>
    <property type="match status" value="1"/>
</dbReference>
<dbReference type="PROSITE" id="PS51883">
    <property type="entry name" value="OBG"/>
    <property type="match status" value="1"/>
</dbReference>
<name>OBG_RIPO1</name>
<gene>
    <name evidence="1" type="primary">obg</name>
    <name type="ordered locus">PCC8801_4390</name>
</gene>
<sequence>MQFIDYAEIEVEGGKGGDGIVAFRREKYVPAGGPAGGNGGWGGSVIFVANSNLQTLLDFRYARRFKADDGKRGGPNNCTGANGKDCLVEVPCGTMVYNLETEEILGDLVENGQTLCVAAGGKGGLGNKHFLSNQNRAPDYALPGLEGEHRWLRLELKLLAEVGIIGLPNAGKSTLMASLSAARPKIADYPFTTLVPNLGVVRKPTGDGTVFADIPGLIEGAHEGIGLGHEFLRHIERTRLLLHLVDITSPDPVKDYQIIQQELEAYGRGLSDRPQIIALNKMDAADEETFLLIKNELTHLSSSPIIGISGVSRTGLEDLLQIVWQLLDS</sequence>
<proteinExistence type="inferred from homology"/>
<organism>
    <name type="scientific">Rippkaea orientalis (strain PCC 8801 / RF-1)</name>
    <name type="common">Cyanothece sp. (strain PCC 8801)</name>
    <dbReference type="NCBI Taxonomy" id="41431"/>
    <lineage>
        <taxon>Bacteria</taxon>
        <taxon>Bacillati</taxon>
        <taxon>Cyanobacteriota</taxon>
        <taxon>Cyanophyceae</taxon>
        <taxon>Oscillatoriophycideae</taxon>
        <taxon>Chroococcales</taxon>
        <taxon>Aphanothecaceae</taxon>
        <taxon>Rippkaea</taxon>
        <taxon>Rippkaea orientalis</taxon>
    </lineage>
</organism>
<feature type="chain" id="PRO_0000385872" description="GTPase Obg">
    <location>
        <begin position="1"/>
        <end position="329"/>
    </location>
</feature>
<feature type="domain" description="Obg" evidence="2">
    <location>
        <begin position="1"/>
        <end position="159"/>
    </location>
</feature>
<feature type="domain" description="OBG-type G" evidence="1">
    <location>
        <begin position="160"/>
        <end position="328"/>
    </location>
</feature>
<feature type="binding site" evidence="1">
    <location>
        <begin position="166"/>
        <end position="173"/>
    </location>
    <ligand>
        <name>GTP</name>
        <dbReference type="ChEBI" id="CHEBI:37565"/>
    </ligand>
</feature>
<feature type="binding site" evidence="1">
    <location>
        <position position="173"/>
    </location>
    <ligand>
        <name>Mg(2+)</name>
        <dbReference type="ChEBI" id="CHEBI:18420"/>
    </ligand>
</feature>
<feature type="binding site" evidence="1">
    <location>
        <begin position="191"/>
        <end position="195"/>
    </location>
    <ligand>
        <name>GTP</name>
        <dbReference type="ChEBI" id="CHEBI:37565"/>
    </ligand>
</feature>
<feature type="binding site" evidence="1">
    <location>
        <position position="193"/>
    </location>
    <ligand>
        <name>Mg(2+)</name>
        <dbReference type="ChEBI" id="CHEBI:18420"/>
    </ligand>
</feature>
<feature type="binding site" evidence="1">
    <location>
        <begin position="213"/>
        <end position="216"/>
    </location>
    <ligand>
        <name>GTP</name>
        <dbReference type="ChEBI" id="CHEBI:37565"/>
    </ligand>
</feature>
<feature type="binding site" evidence="1">
    <location>
        <begin position="280"/>
        <end position="283"/>
    </location>
    <ligand>
        <name>GTP</name>
        <dbReference type="ChEBI" id="CHEBI:37565"/>
    </ligand>
</feature>
<feature type="binding site" evidence="1">
    <location>
        <begin position="309"/>
        <end position="311"/>
    </location>
    <ligand>
        <name>GTP</name>
        <dbReference type="ChEBI" id="CHEBI:37565"/>
    </ligand>
</feature>
<comment type="function">
    <text evidence="1">An essential GTPase which binds GTP, GDP and possibly (p)ppGpp with moderate affinity, with high nucleotide exchange rates and a fairly low GTP hydrolysis rate. Plays a role in control of the cell cycle, stress response, ribosome biogenesis and in those bacteria that undergo differentiation, in morphogenesis control.</text>
</comment>
<comment type="cofactor">
    <cofactor evidence="1">
        <name>Mg(2+)</name>
        <dbReference type="ChEBI" id="CHEBI:18420"/>
    </cofactor>
</comment>
<comment type="subunit">
    <text evidence="1">Monomer.</text>
</comment>
<comment type="subcellular location">
    <subcellularLocation>
        <location evidence="1">Cytoplasm</location>
    </subcellularLocation>
</comment>
<comment type="similarity">
    <text evidence="1">Belongs to the TRAFAC class OBG-HflX-like GTPase superfamily. OBG GTPase family.</text>
</comment>
<accession>B7JVH9</accession>
<keyword id="KW-0963">Cytoplasm</keyword>
<keyword id="KW-0342">GTP-binding</keyword>
<keyword id="KW-0378">Hydrolase</keyword>
<keyword id="KW-0460">Magnesium</keyword>
<keyword id="KW-0479">Metal-binding</keyword>
<keyword id="KW-0547">Nucleotide-binding</keyword>
<keyword id="KW-1185">Reference proteome</keyword>
<protein>
    <recommendedName>
        <fullName evidence="1">GTPase Obg</fullName>
        <ecNumber evidence="1">3.6.5.-</ecNumber>
    </recommendedName>
    <alternativeName>
        <fullName evidence="1">GTP-binding protein Obg</fullName>
    </alternativeName>
</protein>